<keyword id="KW-0963">Cytoplasm</keyword>
<keyword id="KW-0255">Endonuclease</keyword>
<keyword id="KW-0378">Hydrolase</keyword>
<keyword id="KW-0464">Manganese</keyword>
<keyword id="KW-0479">Metal-binding</keyword>
<keyword id="KW-0540">Nuclease</keyword>
<keyword id="KW-1185">Reference proteome</keyword>
<accession>Q9Z9S0</accession>
<reference key="1">
    <citation type="journal article" date="2000" name="Nucleic Acids Res.">
        <title>Complete genome sequence of the alkaliphilic bacterium Bacillus halodurans and genomic sequence comparison with Bacillus subtilis.</title>
        <authorList>
            <person name="Takami H."/>
            <person name="Nakasone K."/>
            <person name="Takaki Y."/>
            <person name="Maeno G."/>
            <person name="Sasaki R."/>
            <person name="Masui N."/>
            <person name="Fuji F."/>
            <person name="Hirama C."/>
            <person name="Nakamura Y."/>
            <person name="Ogasawara N."/>
            <person name="Kuhara S."/>
            <person name="Horikoshi K."/>
        </authorList>
    </citation>
    <scope>NUCLEOTIDE SEQUENCE [LARGE SCALE GENOMIC DNA]</scope>
    <source>
        <strain>ATCC BAA-125 / DSM 18197 / FERM 7344 / JCM 9153 / C-125</strain>
    </source>
</reference>
<reference key="2">
    <citation type="journal article" date="1999" name="Extremophiles">
        <title>An improved physical and genetic map of the genome of alkaliphilic Bacillus sp. C-125.</title>
        <authorList>
            <person name="Takami H."/>
            <person name="Nakasone K."/>
            <person name="Hirama C."/>
            <person name="Takaki Y."/>
            <person name="Masui N."/>
            <person name="Fuji F."/>
            <person name="Nakamura Y."/>
            <person name="Inoue A."/>
        </authorList>
    </citation>
    <scope>NUCLEOTIDE SEQUENCE [GENOMIC DNA] OF 1-192</scope>
    <source>
        <strain>ATCC BAA-125 / DSM 18197 / FERM 7344 / JCM 9153 / C-125</strain>
    </source>
</reference>
<feature type="chain" id="PRO_0000111538" description="Ribonuclease HII">
    <location>
        <begin position="1"/>
        <end position="263"/>
    </location>
</feature>
<feature type="domain" description="RNase H type-2" evidence="2">
    <location>
        <begin position="74"/>
        <end position="262"/>
    </location>
</feature>
<feature type="binding site" evidence="1">
    <location>
        <position position="80"/>
    </location>
    <ligand>
        <name>a divalent metal cation</name>
        <dbReference type="ChEBI" id="CHEBI:60240"/>
    </ligand>
</feature>
<feature type="binding site" evidence="1">
    <location>
        <position position="81"/>
    </location>
    <ligand>
        <name>a divalent metal cation</name>
        <dbReference type="ChEBI" id="CHEBI:60240"/>
    </ligand>
</feature>
<feature type="binding site" evidence="1">
    <location>
        <position position="172"/>
    </location>
    <ligand>
        <name>a divalent metal cation</name>
        <dbReference type="ChEBI" id="CHEBI:60240"/>
    </ligand>
</feature>
<sequence length="263" mass="29333">MSKRLSIKEIDALLRQGDASIDETFLAMLKADERKGVQSALKRYERQLEKEKALWMEHEEMLAYEKDLWAKGYEHVAGLDEVGRGPLAGPVVTAAVILPKDVQLPGLTDSKKLAKETRESFYDRIKEVALAWSVAIVPVTVIDEVNIYQATKQGMMSAIDQLSVNPDALLLDAMNLPLSLPQQSLIKGDQKSLSIAASSVLAKVTRDRYMADLANRYPEYGFERHVGYGTEEHLAALNAHGITPEHRRSFRPVQETAATRQTS</sequence>
<comment type="function">
    <text evidence="1">Endonuclease that specifically degrades the RNA of RNA-DNA hybrids.</text>
</comment>
<comment type="catalytic activity">
    <reaction>
        <text>Endonucleolytic cleavage to 5'-phosphomonoester.</text>
        <dbReference type="EC" id="3.1.26.4"/>
    </reaction>
</comment>
<comment type="cofactor">
    <cofactor evidence="1">
        <name>Mn(2+)</name>
        <dbReference type="ChEBI" id="CHEBI:29035"/>
    </cofactor>
    <cofactor evidence="1">
        <name>Mg(2+)</name>
        <dbReference type="ChEBI" id="CHEBI:18420"/>
    </cofactor>
    <text evidence="1">Manganese or magnesium. Binds 1 divalent metal ion per monomer in the absence of substrate. May bind a second metal ion after substrate binding.</text>
</comment>
<comment type="subcellular location">
    <subcellularLocation>
        <location evidence="3">Cytoplasm</location>
    </subcellularLocation>
</comment>
<comment type="similarity">
    <text evidence="3">Belongs to the RNase HII family.</text>
</comment>
<name>RNH2_HALH5</name>
<evidence type="ECO:0000250" key="1"/>
<evidence type="ECO:0000255" key="2">
    <source>
        <dbReference type="PROSITE-ProRule" id="PRU01319"/>
    </source>
</evidence>
<evidence type="ECO:0000305" key="3"/>
<organism>
    <name type="scientific">Halalkalibacterium halodurans (strain ATCC BAA-125 / DSM 18197 / FERM 7344 / JCM 9153 / C-125)</name>
    <name type="common">Bacillus halodurans</name>
    <dbReference type="NCBI Taxonomy" id="272558"/>
    <lineage>
        <taxon>Bacteria</taxon>
        <taxon>Bacillati</taxon>
        <taxon>Bacillota</taxon>
        <taxon>Bacilli</taxon>
        <taxon>Bacillales</taxon>
        <taxon>Bacillaceae</taxon>
        <taxon>Halalkalibacterium (ex Joshi et al. 2022)</taxon>
    </lineage>
</organism>
<proteinExistence type="inferred from homology"/>
<gene>
    <name type="primary">rnhB</name>
    <name type="synonym">rnh</name>
    <name type="ordered locus">BH2475</name>
</gene>
<dbReference type="EC" id="3.1.26.4"/>
<dbReference type="EMBL" id="BA000004">
    <property type="protein sequence ID" value="BAB06194.1"/>
    <property type="molecule type" value="Genomic_DNA"/>
</dbReference>
<dbReference type="EMBL" id="AB013365">
    <property type="protein sequence ID" value="BAA75362.1"/>
    <property type="molecule type" value="Genomic_DNA"/>
</dbReference>
<dbReference type="PIR" id="C83959">
    <property type="entry name" value="C83959"/>
</dbReference>
<dbReference type="RefSeq" id="WP_010898627.1">
    <property type="nucleotide sequence ID" value="NC_002570.2"/>
</dbReference>
<dbReference type="SMR" id="Q9Z9S0"/>
<dbReference type="STRING" id="272558.gene:10728373"/>
<dbReference type="GeneID" id="87597995"/>
<dbReference type="KEGG" id="bha:BH2475"/>
<dbReference type="eggNOG" id="COG0164">
    <property type="taxonomic scope" value="Bacteria"/>
</dbReference>
<dbReference type="HOGENOM" id="CLU_036532_2_1_9"/>
<dbReference type="OrthoDB" id="9803420at2"/>
<dbReference type="Proteomes" id="UP000001258">
    <property type="component" value="Chromosome"/>
</dbReference>
<dbReference type="GO" id="GO:0005737">
    <property type="term" value="C:cytoplasm"/>
    <property type="evidence" value="ECO:0007669"/>
    <property type="project" value="UniProtKB-SubCell"/>
</dbReference>
<dbReference type="GO" id="GO:0032299">
    <property type="term" value="C:ribonuclease H2 complex"/>
    <property type="evidence" value="ECO:0007669"/>
    <property type="project" value="TreeGrafter"/>
</dbReference>
<dbReference type="GO" id="GO:0030145">
    <property type="term" value="F:manganese ion binding"/>
    <property type="evidence" value="ECO:0007669"/>
    <property type="project" value="UniProtKB-UniRule"/>
</dbReference>
<dbReference type="GO" id="GO:0003723">
    <property type="term" value="F:RNA binding"/>
    <property type="evidence" value="ECO:0007669"/>
    <property type="project" value="InterPro"/>
</dbReference>
<dbReference type="GO" id="GO:0004523">
    <property type="term" value="F:RNA-DNA hybrid ribonuclease activity"/>
    <property type="evidence" value="ECO:0007669"/>
    <property type="project" value="UniProtKB-UniRule"/>
</dbReference>
<dbReference type="GO" id="GO:0043137">
    <property type="term" value="P:DNA replication, removal of RNA primer"/>
    <property type="evidence" value="ECO:0007669"/>
    <property type="project" value="TreeGrafter"/>
</dbReference>
<dbReference type="GO" id="GO:0006298">
    <property type="term" value="P:mismatch repair"/>
    <property type="evidence" value="ECO:0007669"/>
    <property type="project" value="TreeGrafter"/>
</dbReference>
<dbReference type="CDD" id="cd07182">
    <property type="entry name" value="RNase_HII_bacteria_HII_like"/>
    <property type="match status" value="1"/>
</dbReference>
<dbReference type="FunFam" id="3.30.420.10:FF:000006">
    <property type="entry name" value="Ribonuclease HII"/>
    <property type="match status" value="1"/>
</dbReference>
<dbReference type="Gene3D" id="3.30.420.10">
    <property type="entry name" value="Ribonuclease H-like superfamily/Ribonuclease H"/>
    <property type="match status" value="1"/>
</dbReference>
<dbReference type="HAMAP" id="MF_00052_B">
    <property type="entry name" value="RNase_HII_B"/>
    <property type="match status" value="1"/>
</dbReference>
<dbReference type="InterPro" id="IPR022898">
    <property type="entry name" value="RNase_HII"/>
</dbReference>
<dbReference type="InterPro" id="IPR001352">
    <property type="entry name" value="RNase_HII/HIII"/>
</dbReference>
<dbReference type="InterPro" id="IPR024567">
    <property type="entry name" value="RNase_HII/HIII_dom"/>
</dbReference>
<dbReference type="InterPro" id="IPR012337">
    <property type="entry name" value="RNaseH-like_sf"/>
</dbReference>
<dbReference type="InterPro" id="IPR036397">
    <property type="entry name" value="RNaseH_sf"/>
</dbReference>
<dbReference type="NCBIfam" id="NF000594">
    <property type="entry name" value="PRK00015.1-1"/>
    <property type="match status" value="1"/>
</dbReference>
<dbReference type="NCBIfam" id="NF000595">
    <property type="entry name" value="PRK00015.1-3"/>
    <property type="match status" value="1"/>
</dbReference>
<dbReference type="PANTHER" id="PTHR10954">
    <property type="entry name" value="RIBONUCLEASE H2 SUBUNIT A"/>
    <property type="match status" value="1"/>
</dbReference>
<dbReference type="PANTHER" id="PTHR10954:SF18">
    <property type="entry name" value="RIBONUCLEASE HII"/>
    <property type="match status" value="1"/>
</dbReference>
<dbReference type="Pfam" id="PF01351">
    <property type="entry name" value="RNase_HII"/>
    <property type="match status" value="1"/>
</dbReference>
<dbReference type="SUPFAM" id="SSF53098">
    <property type="entry name" value="Ribonuclease H-like"/>
    <property type="match status" value="1"/>
</dbReference>
<dbReference type="PROSITE" id="PS51975">
    <property type="entry name" value="RNASE_H_2"/>
    <property type="match status" value="1"/>
</dbReference>
<protein>
    <recommendedName>
        <fullName>Ribonuclease HII</fullName>
        <shortName>RNase HII</shortName>
        <ecNumber>3.1.26.4</ecNumber>
    </recommendedName>
</protein>